<name>OR4X1_HUMAN</name>
<organism>
    <name type="scientific">Homo sapiens</name>
    <name type="common">Human</name>
    <dbReference type="NCBI Taxonomy" id="9606"/>
    <lineage>
        <taxon>Eukaryota</taxon>
        <taxon>Metazoa</taxon>
        <taxon>Chordata</taxon>
        <taxon>Craniata</taxon>
        <taxon>Vertebrata</taxon>
        <taxon>Euteleostomi</taxon>
        <taxon>Mammalia</taxon>
        <taxon>Eutheria</taxon>
        <taxon>Euarchontoglires</taxon>
        <taxon>Primates</taxon>
        <taxon>Haplorrhini</taxon>
        <taxon>Catarrhini</taxon>
        <taxon>Hominidae</taxon>
        <taxon>Homo</taxon>
    </lineage>
</organism>
<keyword id="KW-1003">Cell membrane</keyword>
<keyword id="KW-1015">Disulfide bond</keyword>
<keyword id="KW-0297">G-protein coupled receptor</keyword>
<keyword id="KW-0325">Glycoprotein</keyword>
<keyword id="KW-0472">Membrane</keyword>
<keyword id="KW-0552">Olfaction</keyword>
<keyword id="KW-0675">Receptor</keyword>
<keyword id="KW-1185">Reference proteome</keyword>
<keyword id="KW-0716">Sensory transduction</keyword>
<keyword id="KW-0807">Transducer</keyword>
<keyword id="KW-0812">Transmembrane</keyword>
<keyword id="KW-1133">Transmembrane helix</keyword>
<evidence type="ECO:0000255" key="1"/>
<evidence type="ECO:0000255" key="2">
    <source>
        <dbReference type="PROSITE-ProRule" id="PRU00521"/>
    </source>
</evidence>
<evidence type="ECO:0000305" key="3"/>
<feature type="chain" id="PRO_0000150570" description="Olfactory receptor 4X1">
    <location>
        <begin position="1"/>
        <end position="305"/>
    </location>
</feature>
<feature type="topological domain" description="Extracellular" evidence="1">
    <location>
        <begin position="1"/>
        <end position="23"/>
    </location>
</feature>
<feature type="transmembrane region" description="Helical; Name=1" evidence="1">
    <location>
        <begin position="24"/>
        <end position="47"/>
    </location>
</feature>
<feature type="topological domain" description="Cytoplasmic" evidence="1">
    <location>
        <begin position="48"/>
        <end position="55"/>
    </location>
</feature>
<feature type="transmembrane region" description="Helical; Name=2" evidence="1">
    <location>
        <begin position="56"/>
        <end position="77"/>
    </location>
</feature>
<feature type="topological domain" description="Extracellular" evidence="1">
    <location>
        <begin position="78"/>
        <end position="98"/>
    </location>
</feature>
<feature type="transmembrane region" description="Helical; Name=3" evidence="1">
    <location>
        <begin position="99"/>
        <end position="118"/>
    </location>
</feature>
<feature type="topological domain" description="Cytoplasmic" evidence="1">
    <location>
        <begin position="119"/>
        <end position="137"/>
    </location>
</feature>
<feature type="transmembrane region" description="Helical; Name=4" evidence="1">
    <location>
        <begin position="138"/>
        <end position="156"/>
    </location>
</feature>
<feature type="topological domain" description="Extracellular" evidence="1">
    <location>
        <begin position="157"/>
        <end position="193"/>
    </location>
</feature>
<feature type="transmembrane region" description="Helical; Name=5" evidence="1">
    <location>
        <begin position="194"/>
        <end position="217"/>
    </location>
</feature>
<feature type="topological domain" description="Cytoplasmic" evidence="1">
    <location>
        <begin position="218"/>
        <end position="233"/>
    </location>
</feature>
<feature type="transmembrane region" description="Helical; Name=6" evidence="1">
    <location>
        <begin position="234"/>
        <end position="256"/>
    </location>
</feature>
<feature type="topological domain" description="Extracellular" evidence="1">
    <location>
        <begin position="257"/>
        <end position="267"/>
    </location>
</feature>
<feature type="transmembrane region" description="Helical; Name=7" evidence="1">
    <location>
        <begin position="268"/>
        <end position="287"/>
    </location>
</feature>
<feature type="topological domain" description="Cytoplasmic" evidence="1">
    <location>
        <begin position="288"/>
        <end position="305"/>
    </location>
</feature>
<feature type="glycosylation site" description="N-linked (GlcNAc...) asparagine" evidence="1">
    <location>
        <position position="6"/>
    </location>
</feature>
<feature type="glycosylation site" description="N-linked (GlcNAc...) asparagine" evidence="1">
    <location>
        <position position="18"/>
    </location>
</feature>
<feature type="disulfide bond" evidence="2">
    <location>
        <begin position="95"/>
        <end position="187"/>
    </location>
</feature>
<feature type="sequence variant" id="VAR_053178" description="In dbSNP:rs1503193.">
    <original>R</original>
    <variation>G</variation>
    <location>
        <position position="144"/>
    </location>
</feature>
<feature type="sequence variant" id="VAR_034210" description="In dbSNP:rs16905753.">
    <original>P</original>
    <variation>L</variation>
    <location>
        <position position="165"/>
    </location>
</feature>
<feature type="sequence variant" id="VAR_053179" description="In dbSNP:rs12798361.">
    <original>L</original>
    <variation>Q</variation>
    <location>
        <position position="196"/>
    </location>
</feature>
<feature type="sequence variant" id="VAR_034211" description="In dbSNP:rs17199104.">
    <original>D</original>
    <variation>N</variation>
    <location>
        <position position="246"/>
    </location>
</feature>
<feature type="sequence variant" id="VAR_034212" description="In dbSNP:rs10838852.">
    <original>P</original>
    <variation>S</variation>
    <location>
        <position position="282"/>
    </location>
</feature>
<sequence length="305" mass="34222">MVATNNVTEIIFVGFSQNWSEQRVISVMFLLMYTAVVLGNGLIVVTILASKVLTSPMYFFLSYLSFVEICYCSVMAPKLIFDSFIKRKVISLKGCLTQMFSLHFFGGTEAFLLMVMAYDRYVAICKPLHYMAIMNQRMCGLLVRIAWGGGLLHSVGQTFLIFQLPFCGPNIMDHYFCDVHPVLELACADTFFISLLIITNGGSISVVSFFVLMASYLIILHFLRSHNLEGQHKALSTCASHVTVVDLFFIPCSLVYIRPCVTLPADKIVAVFYTVVTPLLNPVIYSFRNAEVKNAMRRFIGGKVI</sequence>
<accession>Q8NH49</accession>
<accession>Q6IF74</accession>
<dbReference type="EMBL" id="AB065544">
    <property type="protein sequence ID" value="BAC05789.1"/>
    <property type="molecule type" value="Genomic_DNA"/>
</dbReference>
<dbReference type="EMBL" id="BK004388">
    <property type="protein sequence ID" value="DAA04786.1"/>
    <property type="molecule type" value="Genomic_DNA"/>
</dbReference>
<dbReference type="CCDS" id="CCDS31487.1"/>
<dbReference type="RefSeq" id="NP_001004726.1">
    <property type="nucleotide sequence ID" value="NM_001004726.1"/>
</dbReference>
<dbReference type="SMR" id="Q8NH49"/>
<dbReference type="BioGRID" id="133405">
    <property type="interactions" value="1"/>
</dbReference>
<dbReference type="FunCoup" id="Q8NH49">
    <property type="interactions" value="416"/>
</dbReference>
<dbReference type="STRING" id="9606.ENSP00000321506"/>
<dbReference type="GlyCosmos" id="Q8NH49">
    <property type="glycosylation" value="2 sites, No reported glycans"/>
</dbReference>
<dbReference type="GlyGen" id="Q8NH49">
    <property type="glycosylation" value="2 sites"/>
</dbReference>
<dbReference type="iPTMnet" id="Q8NH49"/>
<dbReference type="BioMuta" id="OR4X1"/>
<dbReference type="DMDM" id="38372808"/>
<dbReference type="PaxDb" id="9606-ENSP00000321506"/>
<dbReference type="ProteomicsDB" id="73658"/>
<dbReference type="Antibodypedia" id="56835">
    <property type="antibodies" value="80 antibodies from 19 providers"/>
</dbReference>
<dbReference type="DNASU" id="390113"/>
<dbReference type="Ensembl" id="ENST00000320048.1">
    <property type="protein sequence ID" value="ENSP00000321506.1"/>
    <property type="gene ID" value="ENSG00000176567.1"/>
</dbReference>
<dbReference type="GeneID" id="390113"/>
<dbReference type="KEGG" id="hsa:390113"/>
<dbReference type="MANE-Select" id="ENST00000320048.1">
    <property type="protein sequence ID" value="ENSP00000321506.1"/>
    <property type="RefSeq nucleotide sequence ID" value="NM_001004726.1"/>
    <property type="RefSeq protein sequence ID" value="NP_001004726.1"/>
</dbReference>
<dbReference type="UCSC" id="uc010rht.2">
    <property type="organism name" value="human"/>
</dbReference>
<dbReference type="AGR" id="HGNC:14854"/>
<dbReference type="CTD" id="390113"/>
<dbReference type="DisGeNET" id="390113"/>
<dbReference type="GeneCards" id="OR4X1"/>
<dbReference type="HGNC" id="HGNC:14854">
    <property type="gene designation" value="OR4X1"/>
</dbReference>
<dbReference type="HPA" id="ENSG00000176567">
    <property type="expression patterns" value="Not detected"/>
</dbReference>
<dbReference type="neXtProt" id="NX_Q8NH49"/>
<dbReference type="OpenTargets" id="ENSG00000176567"/>
<dbReference type="PharmGKB" id="PA32350"/>
<dbReference type="VEuPathDB" id="HostDB:ENSG00000176567"/>
<dbReference type="eggNOG" id="ENOG502T9N0">
    <property type="taxonomic scope" value="Eukaryota"/>
</dbReference>
<dbReference type="GeneTree" id="ENSGT00940000164050"/>
<dbReference type="HOGENOM" id="CLU_012526_8_1_1"/>
<dbReference type="InParanoid" id="Q8NH49"/>
<dbReference type="OMA" id="PFCGLKV"/>
<dbReference type="OrthoDB" id="10017003at2759"/>
<dbReference type="PAN-GO" id="Q8NH49">
    <property type="GO annotations" value="2 GO annotations based on evolutionary models"/>
</dbReference>
<dbReference type="PhylomeDB" id="Q8NH49"/>
<dbReference type="TreeFam" id="TF337350"/>
<dbReference type="PathwayCommons" id="Q8NH49"/>
<dbReference type="Reactome" id="R-HSA-9752946">
    <property type="pathway name" value="Expression and translocation of olfactory receptors"/>
</dbReference>
<dbReference type="BioGRID-ORCS" id="390113">
    <property type="hits" value="2 hits in 741 CRISPR screens"/>
</dbReference>
<dbReference type="ChiTaRS" id="OR4X1">
    <property type="organism name" value="human"/>
</dbReference>
<dbReference type="GeneWiki" id="OR4X1"/>
<dbReference type="GenomeRNAi" id="390113"/>
<dbReference type="Pharos" id="Q8NH49">
    <property type="development level" value="Tdark"/>
</dbReference>
<dbReference type="PRO" id="PR:Q8NH49"/>
<dbReference type="Proteomes" id="UP000005640">
    <property type="component" value="Chromosome 11"/>
</dbReference>
<dbReference type="RNAct" id="Q8NH49">
    <property type="molecule type" value="protein"/>
</dbReference>
<dbReference type="GO" id="GO:0005886">
    <property type="term" value="C:plasma membrane"/>
    <property type="evidence" value="ECO:0000318"/>
    <property type="project" value="GO_Central"/>
</dbReference>
<dbReference type="GO" id="GO:0004930">
    <property type="term" value="F:G protein-coupled receptor activity"/>
    <property type="evidence" value="ECO:0007669"/>
    <property type="project" value="UniProtKB-KW"/>
</dbReference>
<dbReference type="GO" id="GO:0004984">
    <property type="term" value="F:olfactory receptor activity"/>
    <property type="evidence" value="ECO:0000318"/>
    <property type="project" value="GO_Central"/>
</dbReference>
<dbReference type="CDD" id="cd15939">
    <property type="entry name" value="7tmA_OR4A-like"/>
    <property type="match status" value="1"/>
</dbReference>
<dbReference type="FunFam" id="1.10.1220.70:FF:000001">
    <property type="entry name" value="Olfactory receptor"/>
    <property type="match status" value="1"/>
</dbReference>
<dbReference type="FunFam" id="1.20.1070.10:FF:000007">
    <property type="entry name" value="Olfactory receptor"/>
    <property type="match status" value="1"/>
</dbReference>
<dbReference type="Gene3D" id="1.20.1070.10">
    <property type="entry name" value="Rhodopsin 7-helix transmembrane proteins"/>
    <property type="match status" value="1"/>
</dbReference>
<dbReference type="InterPro" id="IPR000276">
    <property type="entry name" value="GPCR_Rhodpsn"/>
</dbReference>
<dbReference type="InterPro" id="IPR017452">
    <property type="entry name" value="GPCR_Rhodpsn_7TM"/>
</dbReference>
<dbReference type="InterPro" id="IPR000725">
    <property type="entry name" value="Olfact_rcpt"/>
</dbReference>
<dbReference type="InterPro" id="IPR050427">
    <property type="entry name" value="Olfactory_Receptors"/>
</dbReference>
<dbReference type="PANTHER" id="PTHR48002">
    <property type="entry name" value="OLFACTORY RECEPTOR"/>
    <property type="match status" value="1"/>
</dbReference>
<dbReference type="Pfam" id="PF13853">
    <property type="entry name" value="7tm_4"/>
    <property type="match status" value="1"/>
</dbReference>
<dbReference type="PRINTS" id="PR00237">
    <property type="entry name" value="GPCRRHODOPSN"/>
</dbReference>
<dbReference type="PRINTS" id="PR00245">
    <property type="entry name" value="OLFACTORYR"/>
</dbReference>
<dbReference type="SUPFAM" id="SSF81321">
    <property type="entry name" value="Family A G protein-coupled receptor-like"/>
    <property type="match status" value="1"/>
</dbReference>
<dbReference type="PROSITE" id="PS00237">
    <property type="entry name" value="G_PROTEIN_RECEP_F1_1"/>
    <property type="match status" value="1"/>
</dbReference>
<dbReference type="PROSITE" id="PS50262">
    <property type="entry name" value="G_PROTEIN_RECEP_F1_2"/>
    <property type="match status" value="1"/>
</dbReference>
<protein>
    <recommendedName>
        <fullName>Olfactory receptor 4X1</fullName>
    </recommendedName>
    <alternativeName>
        <fullName>Olfactory receptor OR11-104</fullName>
    </alternativeName>
</protein>
<comment type="function">
    <text evidence="3">Odorant receptor.</text>
</comment>
<comment type="subcellular location">
    <subcellularLocation>
        <location>Cell membrane</location>
        <topology>Multi-pass membrane protein</topology>
    </subcellularLocation>
</comment>
<comment type="similarity">
    <text evidence="2">Belongs to the G-protein coupled receptor 1 family.</text>
</comment>
<comment type="online information" name="Human Olfactory Receptor Data Exploratorium (HORDE)">
    <link uri="http://genome.weizmann.ac.il/horde/card/index/symbol:OR4X1"/>
</comment>
<reference key="1">
    <citation type="submission" date="2001-07" db="EMBL/GenBank/DDBJ databases">
        <title>Genome-wide discovery and analysis of human seven transmembrane helix receptor genes.</title>
        <authorList>
            <person name="Suwa M."/>
            <person name="Sato T."/>
            <person name="Okouchi I."/>
            <person name="Arita M."/>
            <person name="Futami K."/>
            <person name="Matsumoto S."/>
            <person name="Tsutsumi S."/>
            <person name="Aburatani H."/>
            <person name="Asai K."/>
            <person name="Akiyama Y."/>
        </authorList>
    </citation>
    <scope>NUCLEOTIDE SEQUENCE [GENOMIC DNA]</scope>
</reference>
<reference key="2">
    <citation type="journal article" date="2004" name="Proc. Natl. Acad. Sci. U.S.A.">
        <title>The human olfactory receptor gene family.</title>
        <authorList>
            <person name="Malnic B."/>
            <person name="Godfrey P.A."/>
            <person name="Buck L.B."/>
        </authorList>
    </citation>
    <scope>IDENTIFICATION</scope>
</reference>
<reference key="3">
    <citation type="journal article" date="2004" name="Proc. Natl. Acad. Sci. U.S.A.">
        <authorList>
            <person name="Malnic B."/>
            <person name="Godfrey P.A."/>
            <person name="Buck L.B."/>
        </authorList>
    </citation>
    <scope>ERRATUM OF PUBMED:14983052</scope>
</reference>
<proteinExistence type="inferred from homology"/>
<gene>
    <name type="primary">OR4X1</name>
</gene>